<sequence length="430" mass="46242">MTITISRIHALEILDSRGNPTLQVGVTLSDGSFAQAGVPSGASTGSREALELRDGDAQRYLGKGVQKALANVKNHFAPALIGKPIYDLAALDRIMLAQDGTDFKTHLGANAILGVSLALARAKGASLKKPLYAVLCPQEEYTLPVPMMNIINGGEHADNSVDIQEFMIVPAGFDRFSEALRAGSEIFHTLKKVLKEQGLNTAVGDEGGFAPDLPSNEAAFAVIMQAIERAGYRAGEQIFLAMDAAASEFYREGRYHLASEQKAYTSAEFVDYLADLCRRYPIVSIEDGLHESDWDGWQLLTQSLGERVQLVGDDLFVTNSAILQEGIDKGVANAILIKPNQIGSLSETLQTIALADAAHYAAIISHRSGETEDTTIADIAVATTATQIKTGSLCRSDRVAKYNRLLTIEDELGTRARYAAKAAFLGKIKA</sequence>
<protein>
    <recommendedName>
        <fullName evidence="1">Enolase</fullName>
        <ecNumber evidence="1">4.2.1.11</ecNumber>
    </recommendedName>
    <alternativeName>
        <fullName evidence="1">2-phospho-D-glycerate hydro-lyase</fullName>
    </alternativeName>
    <alternativeName>
        <fullName evidence="1">2-phosphoglycerate dehydratase</fullName>
    </alternativeName>
</protein>
<dbReference type="EC" id="4.2.1.11" evidence="1"/>
<dbReference type="EMBL" id="CP000513">
    <property type="protein sequence ID" value="ABQ13410.1"/>
    <property type="molecule type" value="Genomic_DNA"/>
</dbReference>
<dbReference type="RefSeq" id="WP_012030705.1">
    <property type="nucleotide sequence ID" value="NC_009446.1"/>
</dbReference>
<dbReference type="SMR" id="A5EW24"/>
<dbReference type="STRING" id="246195.DNO_0362"/>
<dbReference type="KEGG" id="dno:DNO_0362"/>
<dbReference type="eggNOG" id="COG0148">
    <property type="taxonomic scope" value="Bacteria"/>
</dbReference>
<dbReference type="HOGENOM" id="CLU_031223_2_1_6"/>
<dbReference type="OrthoDB" id="9804716at2"/>
<dbReference type="UniPathway" id="UPA00109">
    <property type="reaction ID" value="UER00187"/>
</dbReference>
<dbReference type="Proteomes" id="UP000000248">
    <property type="component" value="Chromosome"/>
</dbReference>
<dbReference type="GO" id="GO:0009986">
    <property type="term" value="C:cell surface"/>
    <property type="evidence" value="ECO:0007669"/>
    <property type="project" value="UniProtKB-SubCell"/>
</dbReference>
<dbReference type="GO" id="GO:0005576">
    <property type="term" value="C:extracellular region"/>
    <property type="evidence" value="ECO:0007669"/>
    <property type="project" value="UniProtKB-SubCell"/>
</dbReference>
<dbReference type="GO" id="GO:0000015">
    <property type="term" value="C:phosphopyruvate hydratase complex"/>
    <property type="evidence" value="ECO:0007669"/>
    <property type="project" value="InterPro"/>
</dbReference>
<dbReference type="GO" id="GO:0000287">
    <property type="term" value="F:magnesium ion binding"/>
    <property type="evidence" value="ECO:0007669"/>
    <property type="project" value="UniProtKB-UniRule"/>
</dbReference>
<dbReference type="GO" id="GO:0004634">
    <property type="term" value="F:phosphopyruvate hydratase activity"/>
    <property type="evidence" value="ECO:0007669"/>
    <property type="project" value="UniProtKB-UniRule"/>
</dbReference>
<dbReference type="GO" id="GO:0006096">
    <property type="term" value="P:glycolytic process"/>
    <property type="evidence" value="ECO:0007669"/>
    <property type="project" value="UniProtKB-UniRule"/>
</dbReference>
<dbReference type="CDD" id="cd03313">
    <property type="entry name" value="enolase"/>
    <property type="match status" value="1"/>
</dbReference>
<dbReference type="FunFam" id="3.20.20.120:FF:000001">
    <property type="entry name" value="Enolase"/>
    <property type="match status" value="1"/>
</dbReference>
<dbReference type="Gene3D" id="3.20.20.120">
    <property type="entry name" value="Enolase-like C-terminal domain"/>
    <property type="match status" value="1"/>
</dbReference>
<dbReference type="Gene3D" id="3.30.390.10">
    <property type="entry name" value="Enolase-like, N-terminal domain"/>
    <property type="match status" value="1"/>
</dbReference>
<dbReference type="HAMAP" id="MF_00318">
    <property type="entry name" value="Enolase"/>
    <property type="match status" value="1"/>
</dbReference>
<dbReference type="InterPro" id="IPR000941">
    <property type="entry name" value="Enolase"/>
</dbReference>
<dbReference type="InterPro" id="IPR036849">
    <property type="entry name" value="Enolase-like_C_sf"/>
</dbReference>
<dbReference type="InterPro" id="IPR029017">
    <property type="entry name" value="Enolase-like_N"/>
</dbReference>
<dbReference type="InterPro" id="IPR020810">
    <property type="entry name" value="Enolase_C"/>
</dbReference>
<dbReference type="InterPro" id="IPR020809">
    <property type="entry name" value="Enolase_CS"/>
</dbReference>
<dbReference type="InterPro" id="IPR020811">
    <property type="entry name" value="Enolase_N"/>
</dbReference>
<dbReference type="NCBIfam" id="TIGR01060">
    <property type="entry name" value="eno"/>
    <property type="match status" value="1"/>
</dbReference>
<dbReference type="PANTHER" id="PTHR11902">
    <property type="entry name" value="ENOLASE"/>
    <property type="match status" value="1"/>
</dbReference>
<dbReference type="PANTHER" id="PTHR11902:SF1">
    <property type="entry name" value="ENOLASE"/>
    <property type="match status" value="1"/>
</dbReference>
<dbReference type="Pfam" id="PF00113">
    <property type="entry name" value="Enolase_C"/>
    <property type="match status" value="1"/>
</dbReference>
<dbReference type="Pfam" id="PF03952">
    <property type="entry name" value="Enolase_N"/>
    <property type="match status" value="1"/>
</dbReference>
<dbReference type="PIRSF" id="PIRSF001400">
    <property type="entry name" value="Enolase"/>
    <property type="match status" value="1"/>
</dbReference>
<dbReference type="PRINTS" id="PR00148">
    <property type="entry name" value="ENOLASE"/>
</dbReference>
<dbReference type="SFLD" id="SFLDS00001">
    <property type="entry name" value="Enolase"/>
    <property type="match status" value="1"/>
</dbReference>
<dbReference type="SFLD" id="SFLDF00002">
    <property type="entry name" value="enolase"/>
    <property type="match status" value="1"/>
</dbReference>
<dbReference type="SMART" id="SM01192">
    <property type="entry name" value="Enolase_C"/>
    <property type="match status" value="1"/>
</dbReference>
<dbReference type="SMART" id="SM01193">
    <property type="entry name" value="Enolase_N"/>
    <property type="match status" value="1"/>
</dbReference>
<dbReference type="SUPFAM" id="SSF51604">
    <property type="entry name" value="Enolase C-terminal domain-like"/>
    <property type="match status" value="1"/>
</dbReference>
<dbReference type="SUPFAM" id="SSF54826">
    <property type="entry name" value="Enolase N-terminal domain-like"/>
    <property type="match status" value="1"/>
</dbReference>
<dbReference type="PROSITE" id="PS00164">
    <property type="entry name" value="ENOLASE"/>
    <property type="match status" value="1"/>
</dbReference>
<reference key="1">
    <citation type="journal article" date="2007" name="Nat. Biotechnol.">
        <title>Genome sequence and identification of candidate vaccine antigens from the animal pathogen Dichelobacter nodosus.</title>
        <authorList>
            <person name="Myers G.S.A."/>
            <person name="Parker D."/>
            <person name="Al-Hasani K."/>
            <person name="Kennan R.M."/>
            <person name="Seemann T."/>
            <person name="Ren Q."/>
            <person name="Badger J.H."/>
            <person name="Selengut J.D."/>
            <person name="Deboy R.T."/>
            <person name="Tettelin H."/>
            <person name="Boyce J.D."/>
            <person name="McCarl V.P."/>
            <person name="Han X."/>
            <person name="Nelson W.C."/>
            <person name="Madupu R."/>
            <person name="Mohamoud Y."/>
            <person name="Holley T."/>
            <person name="Fedorova N."/>
            <person name="Khouri H."/>
            <person name="Bottomley S.P."/>
            <person name="Whittington R.J."/>
            <person name="Adler B."/>
            <person name="Songer J.G."/>
            <person name="Rood J.I."/>
            <person name="Paulsen I.T."/>
        </authorList>
    </citation>
    <scope>NUCLEOTIDE SEQUENCE [LARGE SCALE GENOMIC DNA]</scope>
    <source>
        <strain>VCS1703A</strain>
    </source>
</reference>
<evidence type="ECO:0000255" key="1">
    <source>
        <dbReference type="HAMAP-Rule" id="MF_00318"/>
    </source>
</evidence>
<name>ENO_DICNV</name>
<feature type="chain" id="PRO_0000337615" description="Enolase">
    <location>
        <begin position="1"/>
        <end position="430"/>
    </location>
</feature>
<feature type="active site" description="Proton donor" evidence="1">
    <location>
        <position position="206"/>
    </location>
</feature>
<feature type="active site" description="Proton acceptor" evidence="1">
    <location>
        <position position="338"/>
    </location>
</feature>
<feature type="binding site" evidence="1">
    <location>
        <position position="164"/>
    </location>
    <ligand>
        <name>(2R)-2-phosphoglycerate</name>
        <dbReference type="ChEBI" id="CHEBI:58289"/>
    </ligand>
</feature>
<feature type="binding site" evidence="1">
    <location>
        <position position="243"/>
    </location>
    <ligand>
        <name>Mg(2+)</name>
        <dbReference type="ChEBI" id="CHEBI:18420"/>
    </ligand>
</feature>
<feature type="binding site" evidence="1">
    <location>
        <position position="286"/>
    </location>
    <ligand>
        <name>Mg(2+)</name>
        <dbReference type="ChEBI" id="CHEBI:18420"/>
    </ligand>
</feature>
<feature type="binding site" evidence="1">
    <location>
        <position position="313"/>
    </location>
    <ligand>
        <name>Mg(2+)</name>
        <dbReference type="ChEBI" id="CHEBI:18420"/>
    </ligand>
</feature>
<feature type="binding site" evidence="1">
    <location>
        <position position="338"/>
    </location>
    <ligand>
        <name>(2R)-2-phosphoglycerate</name>
        <dbReference type="ChEBI" id="CHEBI:58289"/>
    </ligand>
</feature>
<feature type="binding site" evidence="1">
    <location>
        <position position="367"/>
    </location>
    <ligand>
        <name>(2R)-2-phosphoglycerate</name>
        <dbReference type="ChEBI" id="CHEBI:58289"/>
    </ligand>
</feature>
<feature type="binding site" evidence="1">
    <location>
        <position position="368"/>
    </location>
    <ligand>
        <name>(2R)-2-phosphoglycerate</name>
        <dbReference type="ChEBI" id="CHEBI:58289"/>
    </ligand>
</feature>
<feature type="binding site" evidence="1">
    <location>
        <position position="389"/>
    </location>
    <ligand>
        <name>(2R)-2-phosphoglycerate</name>
        <dbReference type="ChEBI" id="CHEBI:58289"/>
    </ligand>
</feature>
<proteinExistence type="inferred from homology"/>
<gene>
    <name evidence="1" type="primary">eno</name>
    <name type="ordered locus">DNO_0362</name>
</gene>
<comment type="function">
    <text evidence="1">Catalyzes the reversible conversion of 2-phosphoglycerate (2-PG) into phosphoenolpyruvate (PEP). It is essential for the degradation of carbohydrates via glycolysis.</text>
</comment>
<comment type="catalytic activity">
    <reaction evidence="1">
        <text>(2R)-2-phosphoglycerate = phosphoenolpyruvate + H2O</text>
        <dbReference type="Rhea" id="RHEA:10164"/>
        <dbReference type="ChEBI" id="CHEBI:15377"/>
        <dbReference type="ChEBI" id="CHEBI:58289"/>
        <dbReference type="ChEBI" id="CHEBI:58702"/>
        <dbReference type="EC" id="4.2.1.11"/>
    </reaction>
</comment>
<comment type="cofactor">
    <cofactor evidence="1">
        <name>Mg(2+)</name>
        <dbReference type="ChEBI" id="CHEBI:18420"/>
    </cofactor>
    <text evidence="1">Binds a second Mg(2+) ion via substrate during catalysis.</text>
</comment>
<comment type="pathway">
    <text evidence="1">Carbohydrate degradation; glycolysis; pyruvate from D-glyceraldehyde 3-phosphate: step 4/5.</text>
</comment>
<comment type="subunit">
    <text evidence="1">Component of the RNA degradosome, a multiprotein complex involved in RNA processing and mRNA degradation.</text>
</comment>
<comment type="subcellular location">
    <subcellularLocation>
        <location evidence="1">Cytoplasm</location>
    </subcellularLocation>
    <subcellularLocation>
        <location evidence="1">Secreted</location>
    </subcellularLocation>
    <subcellularLocation>
        <location evidence="1">Cell surface</location>
    </subcellularLocation>
    <text evidence="1">Fractions of enolase are present in both the cytoplasm and on the cell surface.</text>
</comment>
<comment type="similarity">
    <text evidence="1">Belongs to the enolase family.</text>
</comment>
<organism>
    <name type="scientific">Dichelobacter nodosus (strain VCS1703A)</name>
    <dbReference type="NCBI Taxonomy" id="246195"/>
    <lineage>
        <taxon>Bacteria</taxon>
        <taxon>Pseudomonadati</taxon>
        <taxon>Pseudomonadota</taxon>
        <taxon>Gammaproteobacteria</taxon>
        <taxon>Cardiobacteriales</taxon>
        <taxon>Cardiobacteriaceae</taxon>
        <taxon>Dichelobacter</taxon>
    </lineage>
</organism>
<keyword id="KW-0963">Cytoplasm</keyword>
<keyword id="KW-0324">Glycolysis</keyword>
<keyword id="KW-0456">Lyase</keyword>
<keyword id="KW-0460">Magnesium</keyword>
<keyword id="KW-0479">Metal-binding</keyword>
<keyword id="KW-1185">Reference proteome</keyword>
<keyword id="KW-0964">Secreted</keyword>
<accession>A5EW24</accession>